<name>BUT77_GIBZE</name>
<accession>I1RV17</accession>
<accession>A0A098DBL4</accession>
<proteinExistence type="evidence at transcript level"/>
<reference key="1">
    <citation type="journal article" date="2007" name="Science">
        <title>The Fusarium graminearum genome reveals a link between localized polymorphism and pathogen specialization.</title>
        <authorList>
            <person name="Cuomo C.A."/>
            <person name="Gueldener U."/>
            <person name="Xu J.-R."/>
            <person name="Trail F."/>
            <person name="Turgeon B.G."/>
            <person name="Di Pietro A."/>
            <person name="Walton J.D."/>
            <person name="Ma L.-J."/>
            <person name="Baker S.E."/>
            <person name="Rep M."/>
            <person name="Adam G."/>
            <person name="Antoniw J."/>
            <person name="Baldwin T."/>
            <person name="Calvo S.E."/>
            <person name="Chang Y.-L."/>
            <person name="DeCaprio D."/>
            <person name="Gale L.R."/>
            <person name="Gnerre S."/>
            <person name="Goswami R.S."/>
            <person name="Hammond-Kosack K."/>
            <person name="Harris L.J."/>
            <person name="Hilburn K."/>
            <person name="Kennell J.C."/>
            <person name="Kroken S."/>
            <person name="Magnuson J.K."/>
            <person name="Mannhaupt G."/>
            <person name="Mauceli E.W."/>
            <person name="Mewes H.-W."/>
            <person name="Mitterbauer R."/>
            <person name="Muehlbauer G."/>
            <person name="Muensterkoetter M."/>
            <person name="Nelson D."/>
            <person name="O'Donnell K."/>
            <person name="Ouellet T."/>
            <person name="Qi W."/>
            <person name="Quesneville H."/>
            <person name="Roncero M.I.G."/>
            <person name="Seong K.-Y."/>
            <person name="Tetko I.V."/>
            <person name="Urban M."/>
            <person name="Waalwijk C."/>
            <person name="Ward T.J."/>
            <person name="Yao J."/>
            <person name="Birren B.W."/>
            <person name="Kistler H.C."/>
        </authorList>
    </citation>
    <scope>NUCLEOTIDE SEQUENCE [LARGE SCALE GENOMIC DNA]</scope>
    <source>
        <strain>ATCC MYA-4620 / CBS 123657 / FGSC 9075 / NRRL 31084 / PH-1</strain>
    </source>
</reference>
<reference key="2">
    <citation type="journal article" date="2010" name="Nature">
        <title>Comparative genomics reveals mobile pathogenicity chromosomes in Fusarium.</title>
        <authorList>
            <person name="Ma L.-J."/>
            <person name="van der Does H.C."/>
            <person name="Borkovich K.A."/>
            <person name="Coleman J.J."/>
            <person name="Daboussi M.-J."/>
            <person name="Di Pietro A."/>
            <person name="Dufresne M."/>
            <person name="Freitag M."/>
            <person name="Grabherr M."/>
            <person name="Henrissat B."/>
            <person name="Houterman P.M."/>
            <person name="Kang S."/>
            <person name="Shim W.-B."/>
            <person name="Woloshuk C."/>
            <person name="Xie X."/>
            <person name="Xu J.-R."/>
            <person name="Antoniw J."/>
            <person name="Baker S.E."/>
            <person name="Bluhm B.H."/>
            <person name="Breakspear A."/>
            <person name="Brown D.W."/>
            <person name="Butchko R.A.E."/>
            <person name="Chapman S."/>
            <person name="Coulson R."/>
            <person name="Coutinho P.M."/>
            <person name="Danchin E.G.J."/>
            <person name="Diener A."/>
            <person name="Gale L.R."/>
            <person name="Gardiner D.M."/>
            <person name="Goff S."/>
            <person name="Hammond-Kosack K.E."/>
            <person name="Hilburn K."/>
            <person name="Hua-Van A."/>
            <person name="Jonkers W."/>
            <person name="Kazan K."/>
            <person name="Kodira C.D."/>
            <person name="Koehrsen M."/>
            <person name="Kumar L."/>
            <person name="Lee Y.-H."/>
            <person name="Li L."/>
            <person name="Manners J.M."/>
            <person name="Miranda-Saavedra D."/>
            <person name="Mukherjee M."/>
            <person name="Park G."/>
            <person name="Park J."/>
            <person name="Park S.-Y."/>
            <person name="Proctor R.H."/>
            <person name="Regev A."/>
            <person name="Ruiz-Roldan M.C."/>
            <person name="Sain D."/>
            <person name="Sakthikumar S."/>
            <person name="Sykes S."/>
            <person name="Schwartz D.C."/>
            <person name="Turgeon B.G."/>
            <person name="Wapinski I."/>
            <person name="Yoder O."/>
            <person name="Young S."/>
            <person name="Zeng Q."/>
            <person name="Zhou S."/>
            <person name="Galagan J."/>
            <person name="Cuomo C.A."/>
            <person name="Kistler H.C."/>
            <person name="Rep M."/>
        </authorList>
    </citation>
    <scope>GENOME REANNOTATION</scope>
    <source>
        <strain>ATCC MYA-4620 / CBS 123657 / FGSC 9075 / NRRL 31084 / PH-1</strain>
    </source>
</reference>
<reference key="3">
    <citation type="journal article" date="2015" name="BMC Genomics">
        <title>The completed genome sequence of the pathogenic ascomycete fungus Fusarium graminearum.</title>
        <authorList>
            <person name="King R."/>
            <person name="Urban M."/>
            <person name="Hammond-Kosack M.C.U."/>
            <person name="Hassani-Pak K."/>
            <person name="Hammond-Kosack K.E."/>
        </authorList>
    </citation>
    <scope>NUCLEOTIDE SEQUENCE [LARGE SCALE GENOMIC DNA]</scope>
    <source>
        <strain>ATCC MYA-4620 / CBS 123657 / FGSC 9075 / NRRL 31084 / PH-1</strain>
    </source>
</reference>
<reference key="4">
    <citation type="journal article" date="2007" name="Fungal Genet. Biol.">
        <title>A novel gene cluster in Fusarium graminearum contains a gene that contributes to butenolide synthesis.</title>
        <authorList>
            <person name="Harris L.J."/>
            <person name="Alexander N.J."/>
            <person name="Saparno A."/>
            <person name="Blackwell B."/>
            <person name="McCormick S.P."/>
            <person name="Desjardins A.E."/>
            <person name="Robert L.S."/>
            <person name="Tinker N."/>
            <person name="Hattori J."/>
            <person name="Piche C."/>
            <person name="Schernthaner J.P."/>
            <person name="Watson R."/>
            <person name="Ouellet T."/>
        </authorList>
    </citation>
    <scope>FUNCTION</scope>
    <scope>INDUCTION</scope>
    <scope>PATHWAY</scope>
</reference>
<organism>
    <name type="scientific">Gibberella zeae (strain ATCC MYA-4620 / CBS 123657 / FGSC 9075 / NRRL 31084 / PH-1)</name>
    <name type="common">Wheat head blight fungus</name>
    <name type="synonym">Fusarium graminearum</name>
    <dbReference type="NCBI Taxonomy" id="229533"/>
    <lineage>
        <taxon>Eukaryota</taxon>
        <taxon>Fungi</taxon>
        <taxon>Dikarya</taxon>
        <taxon>Ascomycota</taxon>
        <taxon>Pezizomycotina</taxon>
        <taxon>Sordariomycetes</taxon>
        <taxon>Hypocreomycetidae</taxon>
        <taxon>Hypocreales</taxon>
        <taxon>Nectriaceae</taxon>
        <taxon>Fusarium</taxon>
    </lineage>
</organism>
<feature type="chain" id="PRO_0000450722" description="NADH:flavin oxidoreductase FG08077">
    <location>
        <begin position="1"/>
        <end position="413"/>
    </location>
</feature>
<feature type="binding site" evidence="1">
    <location>
        <begin position="53"/>
        <end position="56"/>
    </location>
    <ligand>
        <name>FMN</name>
        <dbReference type="ChEBI" id="CHEBI:58210"/>
    </ligand>
</feature>
<feature type="binding site" evidence="1">
    <location>
        <position position="58"/>
    </location>
    <ligand>
        <name>substrate</name>
    </ligand>
</feature>
<feature type="binding site" evidence="1">
    <location>
        <position position="88"/>
    </location>
    <ligand>
        <name>FMN</name>
        <dbReference type="ChEBI" id="CHEBI:58210"/>
    </ligand>
</feature>
<feature type="binding site" evidence="1">
    <location>
        <position position="130"/>
    </location>
    <ligand>
        <name>FMN</name>
        <dbReference type="ChEBI" id="CHEBI:58210"/>
    </ligand>
</feature>
<feature type="binding site" evidence="1">
    <location>
        <begin position="211"/>
        <end position="214"/>
    </location>
    <ligand>
        <name>substrate</name>
    </ligand>
</feature>
<feature type="binding site" evidence="1">
    <location>
        <position position="264"/>
    </location>
    <ligand>
        <name>FMN</name>
        <dbReference type="ChEBI" id="CHEBI:58210"/>
    </ligand>
</feature>
<feature type="binding site" evidence="1">
    <location>
        <begin position="370"/>
        <end position="371"/>
    </location>
    <ligand>
        <name>FMN</name>
        <dbReference type="ChEBI" id="CHEBI:58210"/>
    </ligand>
</feature>
<comment type="function">
    <text evidence="2 5">NADH:flavin oxidoreductase; part of the gene cluster that mediates the biosynthesis of butenolide, a mycotoxin that shows antibiotic activity but does not seem to play a major role in the spread of head blight in wheat (PubMed:17175185). Butenolide is derived from glutamic acid via a 4-acetamido-2-butenoic acid intermediate (Probable). The predicted function of the NADH:flavin oxidoreductase FG08077, the cytochrome P450 monooxygenase FG08079, the decarboxylase FG08083, and the putative acetyltransferase FG08082 are consistent with this pathway, however, the respective activities of the butelonide biosynthesis cluster enzymes have still to be experimentally determined (Probable).</text>
</comment>
<comment type="cofactor">
    <cofactor evidence="1">
        <name>FMN</name>
        <dbReference type="ChEBI" id="CHEBI:58210"/>
    </cofactor>
</comment>
<comment type="pathway">
    <text evidence="5">Mycotoxin biosynthesis.</text>
</comment>
<comment type="induction">
    <text evidence="2">Highly expressed under trichothecene-producing conditions.</text>
</comment>
<comment type="similarity">
    <text evidence="4">Belongs to the NADH:flavin oxidoreductase/NADH oxidase family. NamA subfamily.</text>
</comment>
<gene>
    <name type="ORF">FG08077</name>
    <name type="ORF">FGRAMPH1_01T09063</name>
</gene>
<protein>
    <recommendedName>
        <fullName evidence="3">NADH:flavin oxidoreductase FG08077</fullName>
        <ecNumber evidence="5">1.6.-.-</ecNumber>
    </recommendedName>
    <alternativeName>
        <fullName evidence="3">Butenolide biosynthesis cluster protein FG08077</fullName>
    </alternativeName>
</protein>
<evidence type="ECO:0000250" key="1">
    <source>
        <dbReference type="UniProtKB" id="P54550"/>
    </source>
</evidence>
<evidence type="ECO:0000269" key="2">
    <source>
    </source>
</evidence>
<evidence type="ECO:0000303" key="3">
    <source>
    </source>
</evidence>
<evidence type="ECO:0000305" key="4"/>
<evidence type="ECO:0000305" key="5">
    <source>
    </source>
</evidence>
<keyword id="KW-0285">Flavoprotein</keyword>
<keyword id="KW-0288">FMN</keyword>
<keyword id="KW-0521">NADP</keyword>
<keyword id="KW-0560">Oxidoreductase</keyword>
<keyword id="KW-1185">Reference proteome</keyword>
<sequence>MAYEIIDNIAAEGAPYYTPAQDPPAGTQTSGSTKVFTPITIRGVTFPNRLFLAPLCQYSAKDGYATDWHLTHLGGIIQRGPGLSMVEATAVQNHGRITPQDVGLWEDGQIEPLKRITTFAHSQSQKIGIQLSHAGRKASCVSPWLSINAVAAKEVGGWPDNIVAPSAIAQEAGVNPVPKAFTKEDIEELKNDFLAAAKRAIRAGFDVIEIHAAHGYLLHQFLSPVSNQRTDEYGGSFENRIRVVLEIIDLIRGEIPETTPILVRVSATDWFEYDAQFKDEFPESWTVEQTCKLAQILPKHGVDLVDVSSGGIHPKSAIAIKAGPAYQVDLAKQVKKAVGDSVLVSAVGGIKTGHLAEEVLQSGIDVVRAGRWFQQNPGLVRAFANELGVEVKMANQIDWSFKGRGKNGHKKSP</sequence>
<dbReference type="EC" id="1.6.-.-" evidence="5"/>
<dbReference type="EMBL" id="HG970333">
    <property type="protein sequence ID" value="CEF76334.1"/>
    <property type="molecule type" value="Genomic_DNA"/>
</dbReference>
<dbReference type="RefSeq" id="XP_011320745.1">
    <property type="nucleotide sequence ID" value="XM_011322443.1"/>
</dbReference>
<dbReference type="SMR" id="I1RV17"/>
<dbReference type="STRING" id="229533.I1RV17"/>
<dbReference type="KEGG" id="fgr:FGSG_08077"/>
<dbReference type="VEuPathDB" id="FungiDB:FGRAMPH1_01G09063"/>
<dbReference type="eggNOG" id="KOG0134">
    <property type="taxonomic scope" value="Eukaryota"/>
</dbReference>
<dbReference type="HOGENOM" id="CLU_012153_2_1_1"/>
<dbReference type="InParanoid" id="I1RV17"/>
<dbReference type="OrthoDB" id="12470at110618"/>
<dbReference type="Proteomes" id="UP000070720">
    <property type="component" value="Chromosome 2"/>
</dbReference>
<dbReference type="GO" id="GO:0010181">
    <property type="term" value="F:FMN binding"/>
    <property type="evidence" value="ECO:0007669"/>
    <property type="project" value="InterPro"/>
</dbReference>
<dbReference type="GO" id="GO:0050661">
    <property type="term" value="F:NADP binding"/>
    <property type="evidence" value="ECO:0007669"/>
    <property type="project" value="InterPro"/>
</dbReference>
<dbReference type="GO" id="GO:0003959">
    <property type="term" value="F:NADPH dehydrogenase activity"/>
    <property type="evidence" value="ECO:0007669"/>
    <property type="project" value="InterPro"/>
</dbReference>
<dbReference type="CDD" id="cd02932">
    <property type="entry name" value="OYE_YqiM_FMN"/>
    <property type="match status" value="1"/>
</dbReference>
<dbReference type="Gene3D" id="3.20.20.70">
    <property type="entry name" value="Aldolase class I"/>
    <property type="match status" value="1"/>
</dbReference>
<dbReference type="InterPro" id="IPR013785">
    <property type="entry name" value="Aldolase_TIM"/>
</dbReference>
<dbReference type="InterPro" id="IPR001155">
    <property type="entry name" value="OxRdtase_FMN_N"/>
</dbReference>
<dbReference type="InterPro" id="IPR044152">
    <property type="entry name" value="YqjM-like"/>
</dbReference>
<dbReference type="PANTHER" id="PTHR43303">
    <property type="entry name" value="NADPH DEHYDROGENASE C23G7.10C-RELATED"/>
    <property type="match status" value="1"/>
</dbReference>
<dbReference type="PANTHER" id="PTHR43303:SF4">
    <property type="entry name" value="NADPH DEHYDROGENASE C23G7.10C-RELATED"/>
    <property type="match status" value="1"/>
</dbReference>
<dbReference type="Pfam" id="PF00724">
    <property type="entry name" value="Oxidored_FMN"/>
    <property type="match status" value="1"/>
</dbReference>
<dbReference type="SUPFAM" id="SSF51395">
    <property type="entry name" value="FMN-linked oxidoreductases"/>
    <property type="match status" value="1"/>
</dbReference>